<protein>
    <recommendedName>
        <fullName evidence="1">Putative pterin-4-alpha-carbinolamine dehydratase</fullName>
        <shortName evidence="1">PHS</shortName>
        <ecNumber evidence="1">4.2.1.96</ecNumber>
    </recommendedName>
    <alternativeName>
        <fullName evidence="1">4-alpha-hydroxy-tetrahydropterin dehydratase</fullName>
    </alternativeName>
    <alternativeName>
        <fullName evidence="1">Pterin carbinolamine dehydratase</fullName>
        <shortName evidence="1">PCD</shortName>
    </alternativeName>
</protein>
<comment type="catalytic activity">
    <reaction evidence="1">
        <text>(4aS,6R)-4a-hydroxy-L-erythro-5,6,7,8-tetrahydrobiopterin = (6R)-L-erythro-6,7-dihydrobiopterin + H2O</text>
        <dbReference type="Rhea" id="RHEA:11920"/>
        <dbReference type="ChEBI" id="CHEBI:15377"/>
        <dbReference type="ChEBI" id="CHEBI:15642"/>
        <dbReference type="ChEBI" id="CHEBI:43120"/>
        <dbReference type="EC" id="4.2.1.96"/>
    </reaction>
</comment>
<comment type="similarity">
    <text evidence="1">Belongs to the pterin-4-alpha-carbinolamine dehydratase family.</text>
</comment>
<evidence type="ECO:0000255" key="1">
    <source>
        <dbReference type="HAMAP-Rule" id="MF_00434"/>
    </source>
</evidence>
<sequence>MTGLDRERIVDGAPALSAEELQAALAGLPGWQLAGDGKSICREWRFKNFKQAAQLANLAAWQAEAAGHHPDIAFGWGHARVSYSTHSAGGVSRNDLIMAARLDAATG</sequence>
<name>PHS_PARDP</name>
<keyword id="KW-0456">Lyase</keyword>
<keyword id="KW-1185">Reference proteome</keyword>
<reference key="1">
    <citation type="submission" date="2006-12" db="EMBL/GenBank/DDBJ databases">
        <title>Complete sequence of chromosome 1 of Paracoccus denitrificans PD1222.</title>
        <authorList>
            <person name="Copeland A."/>
            <person name="Lucas S."/>
            <person name="Lapidus A."/>
            <person name="Barry K."/>
            <person name="Detter J.C."/>
            <person name="Glavina del Rio T."/>
            <person name="Hammon N."/>
            <person name="Israni S."/>
            <person name="Dalin E."/>
            <person name="Tice H."/>
            <person name="Pitluck S."/>
            <person name="Munk A.C."/>
            <person name="Brettin T."/>
            <person name="Bruce D."/>
            <person name="Han C."/>
            <person name="Tapia R."/>
            <person name="Gilna P."/>
            <person name="Schmutz J."/>
            <person name="Larimer F."/>
            <person name="Land M."/>
            <person name="Hauser L."/>
            <person name="Kyrpides N."/>
            <person name="Lykidis A."/>
            <person name="Spiro S."/>
            <person name="Richardson D.J."/>
            <person name="Moir J.W.B."/>
            <person name="Ferguson S.J."/>
            <person name="van Spanning R.J.M."/>
            <person name="Richardson P."/>
        </authorList>
    </citation>
    <scope>NUCLEOTIDE SEQUENCE [LARGE SCALE GENOMIC DNA]</scope>
    <source>
        <strain>Pd 1222</strain>
    </source>
</reference>
<feature type="chain" id="PRO_1000192924" description="Putative pterin-4-alpha-carbinolamine dehydratase">
    <location>
        <begin position="1"/>
        <end position="107"/>
    </location>
</feature>
<organism>
    <name type="scientific">Paracoccus denitrificans (strain Pd 1222)</name>
    <dbReference type="NCBI Taxonomy" id="318586"/>
    <lineage>
        <taxon>Bacteria</taxon>
        <taxon>Pseudomonadati</taxon>
        <taxon>Pseudomonadota</taxon>
        <taxon>Alphaproteobacteria</taxon>
        <taxon>Rhodobacterales</taxon>
        <taxon>Paracoccaceae</taxon>
        <taxon>Paracoccus</taxon>
    </lineage>
</organism>
<proteinExistence type="inferred from homology"/>
<accession>A1B3I3</accession>
<gene>
    <name type="ordered locus">Pden_1985</name>
</gene>
<dbReference type="EC" id="4.2.1.96" evidence="1"/>
<dbReference type="EMBL" id="CP000489">
    <property type="protein sequence ID" value="ABL70077.1"/>
    <property type="molecule type" value="Genomic_DNA"/>
</dbReference>
<dbReference type="RefSeq" id="WP_011748274.1">
    <property type="nucleotide sequence ID" value="NC_008686.1"/>
</dbReference>
<dbReference type="SMR" id="A1B3I3"/>
<dbReference type="STRING" id="318586.Pden_1985"/>
<dbReference type="EnsemblBacteria" id="ABL70077">
    <property type="protein sequence ID" value="ABL70077"/>
    <property type="gene ID" value="Pden_1985"/>
</dbReference>
<dbReference type="GeneID" id="93450389"/>
<dbReference type="KEGG" id="pde:Pden_1985"/>
<dbReference type="eggNOG" id="COG2154">
    <property type="taxonomic scope" value="Bacteria"/>
</dbReference>
<dbReference type="HOGENOM" id="CLU_081974_2_2_5"/>
<dbReference type="OrthoDB" id="9794987at2"/>
<dbReference type="Proteomes" id="UP000000361">
    <property type="component" value="Chromosome 1"/>
</dbReference>
<dbReference type="GO" id="GO:0008124">
    <property type="term" value="F:4-alpha-hydroxytetrahydrobiopterin dehydratase activity"/>
    <property type="evidence" value="ECO:0007669"/>
    <property type="project" value="UniProtKB-UniRule"/>
</dbReference>
<dbReference type="GO" id="GO:0006729">
    <property type="term" value="P:tetrahydrobiopterin biosynthetic process"/>
    <property type="evidence" value="ECO:0007669"/>
    <property type="project" value="InterPro"/>
</dbReference>
<dbReference type="CDD" id="cd00913">
    <property type="entry name" value="PCD_DCoH_subfamily_a"/>
    <property type="match status" value="1"/>
</dbReference>
<dbReference type="Gene3D" id="3.30.1360.20">
    <property type="entry name" value="Transcriptional coactivator/pterin dehydratase"/>
    <property type="match status" value="1"/>
</dbReference>
<dbReference type="HAMAP" id="MF_00434">
    <property type="entry name" value="Pterin_4_alpha"/>
    <property type="match status" value="1"/>
</dbReference>
<dbReference type="InterPro" id="IPR036428">
    <property type="entry name" value="PCD_sf"/>
</dbReference>
<dbReference type="InterPro" id="IPR001533">
    <property type="entry name" value="Pterin_deHydtase"/>
</dbReference>
<dbReference type="NCBIfam" id="NF002017">
    <property type="entry name" value="PRK00823.1-2"/>
    <property type="match status" value="1"/>
</dbReference>
<dbReference type="PANTHER" id="PTHR12599">
    <property type="entry name" value="PTERIN-4-ALPHA-CARBINOLAMINE DEHYDRATASE"/>
    <property type="match status" value="1"/>
</dbReference>
<dbReference type="PANTHER" id="PTHR12599:SF0">
    <property type="entry name" value="PTERIN-4-ALPHA-CARBINOLAMINE DEHYDRATASE"/>
    <property type="match status" value="1"/>
</dbReference>
<dbReference type="Pfam" id="PF01329">
    <property type="entry name" value="Pterin_4a"/>
    <property type="match status" value="1"/>
</dbReference>
<dbReference type="SUPFAM" id="SSF55248">
    <property type="entry name" value="PCD-like"/>
    <property type="match status" value="1"/>
</dbReference>